<proteinExistence type="inferred from homology"/>
<reference key="1">
    <citation type="journal article" date="2005" name="Nucleic Acids Res.">
        <title>Genome dynamics and diversity of Shigella species, the etiologic agents of bacillary dysentery.</title>
        <authorList>
            <person name="Yang F."/>
            <person name="Yang J."/>
            <person name="Zhang X."/>
            <person name="Chen L."/>
            <person name="Jiang Y."/>
            <person name="Yan Y."/>
            <person name="Tang X."/>
            <person name="Wang J."/>
            <person name="Xiong Z."/>
            <person name="Dong J."/>
            <person name="Xue Y."/>
            <person name="Zhu Y."/>
            <person name="Xu X."/>
            <person name="Sun L."/>
            <person name="Chen S."/>
            <person name="Nie H."/>
            <person name="Peng J."/>
            <person name="Xu J."/>
            <person name="Wang Y."/>
            <person name="Yuan Z."/>
            <person name="Wen Y."/>
            <person name="Yao Z."/>
            <person name="Shen Y."/>
            <person name="Qiang B."/>
            <person name="Hou Y."/>
            <person name="Yu J."/>
            <person name="Jin Q."/>
        </authorList>
    </citation>
    <scope>NUCLEOTIDE SEQUENCE [LARGE SCALE GENOMIC DNA]</scope>
    <source>
        <strain>Sd197</strain>
    </source>
</reference>
<name>GCS2_SHIDS</name>
<comment type="function">
    <text evidence="1">ATP-dependent carboxylate-amine ligase which exhibits weak glutamate--cysteine ligase activity.</text>
</comment>
<comment type="catalytic activity">
    <reaction evidence="1">
        <text>L-cysteine + L-glutamate + ATP = gamma-L-glutamyl-L-cysteine + ADP + phosphate + H(+)</text>
        <dbReference type="Rhea" id="RHEA:13285"/>
        <dbReference type="ChEBI" id="CHEBI:15378"/>
        <dbReference type="ChEBI" id="CHEBI:29985"/>
        <dbReference type="ChEBI" id="CHEBI:30616"/>
        <dbReference type="ChEBI" id="CHEBI:35235"/>
        <dbReference type="ChEBI" id="CHEBI:43474"/>
        <dbReference type="ChEBI" id="CHEBI:58173"/>
        <dbReference type="ChEBI" id="CHEBI:456216"/>
        <dbReference type="EC" id="6.3.2.2"/>
    </reaction>
</comment>
<comment type="subunit">
    <text evidence="1">Homodimer.</text>
</comment>
<comment type="similarity">
    <text evidence="1">Belongs to the glutamate--cysteine ligase type 2 family. YbdK subfamily.</text>
</comment>
<keyword id="KW-0067">ATP-binding</keyword>
<keyword id="KW-0436">Ligase</keyword>
<keyword id="KW-0547">Nucleotide-binding</keyword>
<keyword id="KW-1185">Reference proteome</keyword>
<gene>
    <name type="primary">ybdK</name>
    <name type="ordered locus">SDY_0494</name>
</gene>
<sequence length="372" mass="41673">MPLSDFHVSEPFTLGIELEMQVVNPPGYDLSQDSSMLIDAVKNEITAGEVKHDITESMLELATDVCRDINQAAGQFSAMQKVVLQAAADHHLEICGGGTHPFQKWQRQEVCDNERYQRTLENFGYPIQQATVFGQHVHVGCASGDDAIYLLHGLSRFVPHFIALSAASPYMQGTDTRFASSRPNIFSAFPDNGPMPWVSNWQQFEALFRCLSYTTMIDSIKDLHWDIRPSPHFGTVEVRVMDTPLTLSHAVNMAGLIQATAHWLLTERPFKHQEKDYLLYKFNRFQACRYGLEGVITDPYTGDRRPLTEDTLRLLEKIAPSAHKIAASSAIEALHRQVVSGLNEAQLMRDFVADGGSLIGLVKKHCEIWAGD</sequence>
<dbReference type="EC" id="6.3.2.2" evidence="1"/>
<dbReference type="EMBL" id="CP000034">
    <property type="protein sequence ID" value="ABB60701.1"/>
    <property type="molecule type" value="Genomic_DNA"/>
</dbReference>
<dbReference type="RefSeq" id="WP_001131209.1">
    <property type="nucleotide sequence ID" value="NC_007606.1"/>
</dbReference>
<dbReference type="RefSeq" id="YP_402190.1">
    <property type="nucleotide sequence ID" value="NC_007606.1"/>
</dbReference>
<dbReference type="SMR" id="Q32J06"/>
<dbReference type="STRING" id="300267.SDY_0494"/>
<dbReference type="EnsemblBacteria" id="ABB60701">
    <property type="protein sequence ID" value="ABB60701"/>
    <property type="gene ID" value="SDY_0494"/>
</dbReference>
<dbReference type="KEGG" id="sdy:SDY_0494"/>
<dbReference type="PATRIC" id="fig|300267.13.peg.583"/>
<dbReference type="HOGENOM" id="CLU_044848_1_1_6"/>
<dbReference type="Proteomes" id="UP000002716">
    <property type="component" value="Chromosome"/>
</dbReference>
<dbReference type="GO" id="GO:0005524">
    <property type="term" value="F:ATP binding"/>
    <property type="evidence" value="ECO:0007669"/>
    <property type="project" value="UniProtKB-KW"/>
</dbReference>
<dbReference type="GO" id="GO:0004357">
    <property type="term" value="F:glutamate-cysteine ligase activity"/>
    <property type="evidence" value="ECO:0007669"/>
    <property type="project" value="UniProtKB-EC"/>
</dbReference>
<dbReference type="GO" id="GO:0042398">
    <property type="term" value="P:modified amino acid biosynthetic process"/>
    <property type="evidence" value="ECO:0007669"/>
    <property type="project" value="InterPro"/>
</dbReference>
<dbReference type="FunFam" id="3.30.590.20:FF:000002">
    <property type="entry name" value="Putative glutamate--cysteine ligase 2"/>
    <property type="match status" value="1"/>
</dbReference>
<dbReference type="Gene3D" id="3.30.590.20">
    <property type="match status" value="1"/>
</dbReference>
<dbReference type="HAMAP" id="MF_01609">
    <property type="entry name" value="Glu_cys_ligase_2"/>
    <property type="match status" value="1"/>
</dbReference>
<dbReference type="InterPro" id="IPR050141">
    <property type="entry name" value="GCL_type2/YbdK_subfam"/>
</dbReference>
<dbReference type="InterPro" id="IPR006336">
    <property type="entry name" value="GCS2"/>
</dbReference>
<dbReference type="InterPro" id="IPR014746">
    <property type="entry name" value="Gln_synth/guanido_kin_cat_dom"/>
</dbReference>
<dbReference type="InterPro" id="IPR011793">
    <property type="entry name" value="YbdK"/>
</dbReference>
<dbReference type="NCBIfam" id="TIGR02050">
    <property type="entry name" value="gshA_cyan_rel"/>
    <property type="match status" value="1"/>
</dbReference>
<dbReference type="NCBIfam" id="NF010040">
    <property type="entry name" value="PRK13516.1"/>
    <property type="match status" value="1"/>
</dbReference>
<dbReference type="PANTHER" id="PTHR36510">
    <property type="entry name" value="GLUTAMATE--CYSTEINE LIGASE 2-RELATED"/>
    <property type="match status" value="1"/>
</dbReference>
<dbReference type="PANTHER" id="PTHR36510:SF1">
    <property type="entry name" value="GLUTAMATE--CYSTEINE LIGASE 2-RELATED"/>
    <property type="match status" value="1"/>
</dbReference>
<dbReference type="Pfam" id="PF04107">
    <property type="entry name" value="GCS2"/>
    <property type="match status" value="1"/>
</dbReference>
<dbReference type="SUPFAM" id="SSF55931">
    <property type="entry name" value="Glutamine synthetase/guanido kinase"/>
    <property type="match status" value="1"/>
</dbReference>
<organism>
    <name type="scientific">Shigella dysenteriae serotype 1 (strain Sd197)</name>
    <dbReference type="NCBI Taxonomy" id="300267"/>
    <lineage>
        <taxon>Bacteria</taxon>
        <taxon>Pseudomonadati</taxon>
        <taxon>Pseudomonadota</taxon>
        <taxon>Gammaproteobacteria</taxon>
        <taxon>Enterobacterales</taxon>
        <taxon>Enterobacteriaceae</taxon>
        <taxon>Shigella</taxon>
    </lineage>
</organism>
<evidence type="ECO:0000255" key="1">
    <source>
        <dbReference type="HAMAP-Rule" id="MF_01609"/>
    </source>
</evidence>
<protein>
    <recommendedName>
        <fullName evidence="1">Putative glutamate--cysteine ligase 2</fullName>
        <ecNumber evidence="1">6.3.2.2</ecNumber>
    </recommendedName>
    <alternativeName>
        <fullName evidence="1">Gamma-glutamylcysteine synthetase 2</fullName>
        <shortName evidence="1">GCS 2</shortName>
        <shortName evidence="1">Gamma-GCS 2</shortName>
    </alternativeName>
</protein>
<feature type="chain" id="PRO_0000255815" description="Putative glutamate--cysteine ligase 2">
    <location>
        <begin position="1"/>
        <end position="372"/>
    </location>
</feature>
<accession>Q32J06</accession>